<reference key="1">
    <citation type="journal article" date="2005" name="Nature">
        <title>Sequencing of Aspergillus nidulans and comparative analysis with A. fumigatus and A. oryzae.</title>
        <authorList>
            <person name="Galagan J.E."/>
            <person name="Calvo S.E."/>
            <person name="Cuomo C."/>
            <person name="Ma L.-J."/>
            <person name="Wortman J.R."/>
            <person name="Batzoglou S."/>
            <person name="Lee S.-I."/>
            <person name="Bastuerkmen M."/>
            <person name="Spevak C.C."/>
            <person name="Clutterbuck J."/>
            <person name="Kapitonov V."/>
            <person name="Jurka J."/>
            <person name="Scazzocchio C."/>
            <person name="Farman M.L."/>
            <person name="Butler J."/>
            <person name="Purcell S."/>
            <person name="Harris S."/>
            <person name="Braus G.H."/>
            <person name="Draht O."/>
            <person name="Busch S."/>
            <person name="D'Enfert C."/>
            <person name="Bouchier C."/>
            <person name="Goldman G.H."/>
            <person name="Bell-Pedersen D."/>
            <person name="Griffiths-Jones S."/>
            <person name="Doonan J.H."/>
            <person name="Yu J."/>
            <person name="Vienken K."/>
            <person name="Pain A."/>
            <person name="Freitag M."/>
            <person name="Selker E.U."/>
            <person name="Archer D.B."/>
            <person name="Penalva M.A."/>
            <person name="Oakley B.R."/>
            <person name="Momany M."/>
            <person name="Tanaka T."/>
            <person name="Kumagai T."/>
            <person name="Asai K."/>
            <person name="Machida M."/>
            <person name="Nierman W.C."/>
            <person name="Denning D.W."/>
            <person name="Caddick M.X."/>
            <person name="Hynes M."/>
            <person name="Paoletti M."/>
            <person name="Fischer R."/>
            <person name="Miller B.L."/>
            <person name="Dyer P.S."/>
            <person name="Sachs M.S."/>
            <person name="Osmani S.A."/>
            <person name="Birren B.W."/>
        </authorList>
    </citation>
    <scope>NUCLEOTIDE SEQUENCE [LARGE SCALE GENOMIC DNA]</scope>
    <source>
        <strain>FGSC A4 / ATCC 38163 / CBS 112.46 / NRRL 194 / M139</strain>
    </source>
</reference>
<reference key="2">
    <citation type="journal article" date="2009" name="Fungal Genet. Biol.">
        <title>The 2008 update of the Aspergillus nidulans genome annotation: a community effort.</title>
        <authorList>
            <person name="Wortman J.R."/>
            <person name="Gilsenan J.M."/>
            <person name="Joardar V."/>
            <person name="Deegan J."/>
            <person name="Clutterbuck J."/>
            <person name="Andersen M.R."/>
            <person name="Archer D."/>
            <person name="Bencina M."/>
            <person name="Braus G."/>
            <person name="Coutinho P."/>
            <person name="von Dohren H."/>
            <person name="Doonan J."/>
            <person name="Driessen A.J."/>
            <person name="Durek P."/>
            <person name="Espeso E."/>
            <person name="Fekete E."/>
            <person name="Flipphi M."/>
            <person name="Estrada C.G."/>
            <person name="Geysens S."/>
            <person name="Goldman G."/>
            <person name="de Groot P.W."/>
            <person name="Hansen K."/>
            <person name="Harris S.D."/>
            <person name="Heinekamp T."/>
            <person name="Helmstaedt K."/>
            <person name="Henrissat B."/>
            <person name="Hofmann G."/>
            <person name="Homan T."/>
            <person name="Horio T."/>
            <person name="Horiuchi H."/>
            <person name="James S."/>
            <person name="Jones M."/>
            <person name="Karaffa L."/>
            <person name="Karanyi Z."/>
            <person name="Kato M."/>
            <person name="Keller N."/>
            <person name="Kelly D.E."/>
            <person name="Kiel J.A."/>
            <person name="Kim J.M."/>
            <person name="van der Klei I.J."/>
            <person name="Klis F.M."/>
            <person name="Kovalchuk A."/>
            <person name="Krasevec N."/>
            <person name="Kubicek C.P."/>
            <person name="Liu B."/>
            <person name="Maccabe A."/>
            <person name="Meyer V."/>
            <person name="Mirabito P."/>
            <person name="Miskei M."/>
            <person name="Mos M."/>
            <person name="Mullins J."/>
            <person name="Nelson D.R."/>
            <person name="Nielsen J."/>
            <person name="Oakley B.R."/>
            <person name="Osmani S.A."/>
            <person name="Pakula T."/>
            <person name="Paszewski A."/>
            <person name="Paulsen I."/>
            <person name="Pilsyk S."/>
            <person name="Pocsi I."/>
            <person name="Punt P.J."/>
            <person name="Ram A.F."/>
            <person name="Ren Q."/>
            <person name="Robellet X."/>
            <person name="Robson G."/>
            <person name="Seiboth B."/>
            <person name="van Solingen P."/>
            <person name="Specht T."/>
            <person name="Sun J."/>
            <person name="Taheri-Talesh N."/>
            <person name="Takeshita N."/>
            <person name="Ussery D."/>
            <person name="vanKuyk P.A."/>
            <person name="Visser H."/>
            <person name="van de Vondervoort P.J."/>
            <person name="de Vries R.P."/>
            <person name="Walton J."/>
            <person name="Xiang X."/>
            <person name="Xiong Y."/>
            <person name="Zeng A.P."/>
            <person name="Brandt B.W."/>
            <person name="Cornell M.J."/>
            <person name="van den Hondel C.A."/>
            <person name="Visser J."/>
            <person name="Oliver S.G."/>
            <person name="Turner G."/>
        </authorList>
    </citation>
    <scope>GENOME REANNOTATION</scope>
    <source>
        <strain>FGSC A4 / ATCC 38163 / CBS 112.46 / NRRL 194 / M139</strain>
    </source>
</reference>
<reference key="3">
    <citation type="journal article" date="2010" name="Appl. Environ. Microbiol.">
        <title>Characterization of the Aspergillus nidulans monodictyphenone gene cluster.</title>
        <authorList>
            <person name="Chiang Y.M."/>
            <person name="Szewczyk E."/>
            <person name="Davidson A.D."/>
            <person name="Entwistle R."/>
            <person name="Keller N.P."/>
            <person name="Wang C.C."/>
            <person name="Oakley B.R."/>
        </authorList>
    </citation>
    <scope>FUNCTION</scope>
    <scope>DISRUPTION PHENOTYPE</scope>
</reference>
<reference key="4">
    <citation type="journal article" date="2011" name="J. Am. Chem. Soc.">
        <title>Genome-based deletion analysis reveals the prenyl xanthone biosynthesis pathway in Aspergillus nidulans.</title>
        <authorList>
            <person name="Sanchez J.F."/>
            <person name="Entwistle R."/>
            <person name="Hung J.H."/>
            <person name="Yaegashi J."/>
            <person name="Jain S."/>
            <person name="Chiang Y.M."/>
            <person name="Wang C.C."/>
            <person name="Oakley B.R."/>
        </authorList>
    </citation>
    <scope>FUNCTION</scope>
    <scope>DISRUPTION PHENOTYPE</scope>
</reference>
<reference key="5">
    <citation type="journal article" date="2012" name="ChemBioChem">
        <title>Genetic and biosynthetic studies of the fungal prenylated xanthone shamixanthone and related metabolites in Aspergillus spp. revisited.</title>
        <authorList>
            <person name="Simpson T.J."/>
        </authorList>
    </citation>
    <scope>FUNCTION</scope>
    <scope>DISRUPTION PHENOTYPE</scope>
    <scope>PATHWAY</scope>
</reference>
<comment type="function">
    <text evidence="1 4 5 6">Glutathione S-transferase; part of the gene cluster that mediates the biosynthesis of monodictyphenone, a prenyl xanthone derivative (PubMed:20139316, PubMed:21351751, PubMed:22730213). The pathway begins with the synthesis of atrochrysone thioester by the polyketide synthase (PKS) mdpG (PubMed:20139316). The atrochrysone carboxyl ACP thioesterase mdpF then breaks the thioester bond and releases the atrochrysone carboxylic acid from mdpG (PubMed:20139316). The atrochrysone carboxylic acid is then converted to atrochrysone which is further transformed into emodin anthrone (PubMed:20139316). The next step is performed by the anthrone oxygenase mdpH that catalyzes the oxidation of emodinanthrone to emodin (By similarity). Emodin is further modified to yield monodictyphenone via several steps involving mdpB, mdpC mdpJ, mdpK and mdpL (PubMed:20139316, PubMed:21351751). These enzymes with xptA, xptB and xptC are also proposed to be involved in the synthesis of shamixanthone from emodin (PubMed:22730213). Especially, direct reduction of emodin by the short chain dehydrogenase mdpC followed by dehydration catalyzed by the scytalone dehydratase-like protein mdpB gives loss of oxygen and formation of chrysophanol intermediate in two simple steps (PubMed:22730213).</text>
</comment>
<comment type="pathway">
    <text evidence="4 5 6">Secondary metabolite biosynthesis.</text>
</comment>
<comment type="disruption phenotype">
    <text evidence="4 5 6">Impairs the production of monodictyphenone. but still enables the production of intermediates untill emodin.</text>
</comment>
<comment type="similarity">
    <text evidence="9">Belongs to the GST superfamily.</text>
</comment>
<accession>C8VQ63</accession>
<proteinExistence type="inferred from homology"/>
<gene>
    <name evidence="7" type="primary">mdpJ</name>
    <name type="ORF">ANIA_10038</name>
</gene>
<feature type="chain" id="PRO_0000437068" description="Glutathione S-transferase mdpJ">
    <location>
        <begin position="1"/>
        <end position="210"/>
    </location>
</feature>
<feature type="domain" description="GST N-terminal" evidence="2">
    <location>
        <begin position="2"/>
        <end position="83"/>
    </location>
</feature>
<feature type="domain" description="GST C-terminal" evidence="3">
    <location>
        <begin position="77"/>
        <end position="200"/>
    </location>
</feature>
<sequence length="210" mass="23726">MSFGTLYTHNPTPRSTTLIALAKLHNLDVKIIHAEKKNKEAFEELCRYNPLGQVPTFVGADGFVLSECIPLTLYCNDERSSLRILQWMSFANSDLFPAVGGVFLPRIGQRQIIQQDDGDSLRAMLQRCKYLDEHLKRSRYLVGESITIADFFAASLLMGAFAAFRRSMQERFGALCSWYDGVLEIGWFKKVAGGVPDLGLELEIPEDIKW</sequence>
<evidence type="ECO:0000250" key="1">
    <source>
        <dbReference type="UniProtKB" id="Q0CCY3"/>
    </source>
</evidence>
<evidence type="ECO:0000255" key="2">
    <source>
        <dbReference type="PROSITE-ProRule" id="PRU00684"/>
    </source>
</evidence>
<evidence type="ECO:0000255" key="3">
    <source>
        <dbReference type="PROSITE-ProRule" id="PRU00685"/>
    </source>
</evidence>
<evidence type="ECO:0000269" key="4">
    <source>
    </source>
</evidence>
<evidence type="ECO:0000269" key="5">
    <source>
    </source>
</evidence>
<evidence type="ECO:0000269" key="6">
    <source>
    </source>
</evidence>
<evidence type="ECO:0000303" key="7">
    <source>
    </source>
</evidence>
<evidence type="ECO:0000303" key="8">
    <source>
    </source>
</evidence>
<evidence type="ECO:0000305" key="9"/>
<evidence type="ECO:0000305" key="10">
    <source>
    </source>
</evidence>
<name>MDPJ_EMENI</name>
<dbReference type="EC" id="2.5.1.-" evidence="10"/>
<dbReference type="EMBL" id="BN001308">
    <property type="protein sequence ID" value="CBF90092.1"/>
    <property type="molecule type" value="Genomic_DNA"/>
</dbReference>
<dbReference type="SMR" id="C8VQ63"/>
<dbReference type="STRING" id="227321.C8VQ63"/>
<dbReference type="EnsemblFungi" id="CBF90092">
    <property type="protein sequence ID" value="CBF90092"/>
    <property type="gene ID" value="ANIA_10038"/>
</dbReference>
<dbReference type="eggNOG" id="KOG0867">
    <property type="taxonomic scope" value="Eukaryota"/>
</dbReference>
<dbReference type="HOGENOM" id="CLU_011226_3_2_1"/>
<dbReference type="InParanoid" id="C8VQ63"/>
<dbReference type="OMA" id="KAPRATM"/>
<dbReference type="OrthoDB" id="249703at2759"/>
<dbReference type="Proteomes" id="UP000000560">
    <property type="component" value="Chromosome VIII"/>
</dbReference>
<dbReference type="GO" id="GO:0005737">
    <property type="term" value="C:cytoplasm"/>
    <property type="evidence" value="ECO:0000318"/>
    <property type="project" value="GO_Central"/>
</dbReference>
<dbReference type="GO" id="GO:0005634">
    <property type="term" value="C:nucleus"/>
    <property type="evidence" value="ECO:0000318"/>
    <property type="project" value="GO_Central"/>
</dbReference>
<dbReference type="GO" id="GO:0016740">
    <property type="term" value="F:transferase activity"/>
    <property type="evidence" value="ECO:0007669"/>
    <property type="project" value="UniProtKB-KW"/>
</dbReference>
<dbReference type="CDD" id="cd03044">
    <property type="entry name" value="GST_N_EF1Bgamma"/>
    <property type="match status" value="1"/>
</dbReference>
<dbReference type="FunFam" id="1.20.1050.10:FF:000006">
    <property type="entry name" value="Elongation factor 1 gamma"/>
    <property type="match status" value="1"/>
</dbReference>
<dbReference type="FunFam" id="3.40.30.10:FF:000142">
    <property type="entry name" value="Elongation factor 1 gamma"/>
    <property type="match status" value="1"/>
</dbReference>
<dbReference type="Gene3D" id="1.20.1050.10">
    <property type="match status" value="1"/>
</dbReference>
<dbReference type="Gene3D" id="3.40.30.10">
    <property type="entry name" value="Glutaredoxin"/>
    <property type="match status" value="1"/>
</dbReference>
<dbReference type="InterPro" id="IPR050802">
    <property type="entry name" value="EF-GSTs"/>
</dbReference>
<dbReference type="InterPro" id="IPR010987">
    <property type="entry name" value="Glutathione-S-Trfase_C-like"/>
</dbReference>
<dbReference type="InterPro" id="IPR036282">
    <property type="entry name" value="Glutathione-S-Trfase_C_sf"/>
</dbReference>
<dbReference type="InterPro" id="IPR004045">
    <property type="entry name" value="Glutathione_S-Trfase_N"/>
</dbReference>
<dbReference type="InterPro" id="IPR004046">
    <property type="entry name" value="GST_C"/>
</dbReference>
<dbReference type="InterPro" id="IPR036249">
    <property type="entry name" value="Thioredoxin-like_sf"/>
</dbReference>
<dbReference type="PANTHER" id="PTHR43986">
    <property type="entry name" value="ELONGATION FACTOR 1-GAMMA"/>
    <property type="match status" value="1"/>
</dbReference>
<dbReference type="PANTHER" id="PTHR43986:SF1">
    <property type="entry name" value="ELONGATION FACTOR 1-GAMMA"/>
    <property type="match status" value="1"/>
</dbReference>
<dbReference type="Pfam" id="PF00043">
    <property type="entry name" value="GST_C"/>
    <property type="match status" value="1"/>
</dbReference>
<dbReference type="Pfam" id="PF02798">
    <property type="entry name" value="GST_N"/>
    <property type="match status" value="1"/>
</dbReference>
<dbReference type="SUPFAM" id="SSF47616">
    <property type="entry name" value="GST C-terminal domain-like"/>
    <property type="match status" value="1"/>
</dbReference>
<dbReference type="SUPFAM" id="SSF52833">
    <property type="entry name" value="Thioredoxin-like"/>
    <property type="match status" value="1"/>
</dbReference>
<dbReference type="PROSITE" id="PS50405">
    <property type="entry name" value="GST_CTER"/>
    <property type="match status" value="1"/>
</dbReference>
<dbReference type="PROSITE" id="PS50404">
    <property type="entry name" value="GST_NTER"/>
    <property type="match status" value="1"/>
</dbReference>
<protein>
    <recommendedName>
        <fullName evidence="8">Glutathione S-transferase mdpJ</fullName>
        <ecNumber evidence="10">2.5.1.-</ecNumber>
    </recommendedName>
    <alternativeName>
        <fullName evidence="7">Monodictyphenone synthesis protein J</fullName>
    </alternativeName>
</protein>
<organism>
    <name type="scientific">Emericella nidulans (strain FGSC A4 / ATCC 38163 / CBS 112.46 / NRRL 194 / M139)</name>
    <name type="common">Aspergillus nidulans</name>
    <dbReference type="NCBI Taxonomy" id="227321"/>
    <lineage>
        <taxon>Eukaryota</taxon>
        <taxon>Fungi</taxon>
        <taxon>Dikarya</taxon>
        <taxon>Ascomycota</taxon>
        <taxon>Pezizomycotina</taxon>
        <taxon>Eurotiomycetes</taxon>
        <taxon>Eurotiomycetidae</taxon>
        <taxon>Eurotiales</taxon>
        <taxon>Aspergillaceae</taxon>
        <taxon>Aspergillus</taxon>
        <taxon>Aspergillus subgen. Nidulantes</taxon>
    </lineage>
</organism>
<keyword id="KW-1185">Reference proteome</keyword>
<keyword id="KW-0808">Transferase</keyword>